<keyword id="KW-0125">Carotenoid biosynthesis</keyword>
<keyword id="KW-0560">Oxidoreductase</keyword>
<organism>
    <name type="scientific">Cytobacillus firmus</name>
    <name type="common">Bacillus firmus</name>
    <dbReference type="NCBI Taxonomy" id="1399"/>
    <lineage>
        <taxon>Bacteria</taxon>
        <taxon>Bacillati</taxon>
        <taxon>Bacillota</taxon>
        <taxon>Bacilli</taxon>
        <taxon>Bacillales</taxon>
        <taxon>Bacillaceae</taxon>
        <taxon>Cytobacillus</taxon>
    </lineage>
</organism>
<gene>
    <name evidence="6" type="primary">crtNc</name>
</gene>
<sequence length="453" mass="50131">MPDNDSHSLKSLPERQREDLFSAGSPSLEARKKQLSRLKTMIVDHEEAFTRALHADLGKPAFESFSSEIAVLLNEIDHVCKHIAKWNRQSRSRYLKMGYVESIKRKRHPYGSVLIIGSWNYPLQLSLMPAIGAIAAGNRCVIKPSEHAPATAELLKKIINDAFPPEQLLVVTGDAQTASHLTAAPFDLIFFTGSGQTGKAVAEQAARQLTPVILELGGKNPCIIDETGFSKEAVREIVWGKFLNAGQTCIAPDTLFVHQSVYEKMLNEISAAVSAFYGEQPRESSDYGRICTDDHFQKVIEFIGQGDVRHGGSYDRSDRFIAPTVLTDIEPGSPILQEEIFGPVLPVIPYTDMRTLLSSGRIQRDALTGYIFSKNKDNIQLFKEHMRSSTISVNQVIHHAASPHIAFGGVGTSGYGAYHGKAGFLAFSYEKQNTEHIITSIFKVNSRHILIQI</sequence>
<name>CRTNC_CYTFI</name>
<feature type="chain" id="PRO_0000443511" description="4,4'-diapolycopene-4,4'-dial dehydrogenase">
    <location>
        <begin position="1"/>
        <end position="453"/>
    </location>
</feature>
<feature type="region of interest" description="Disordered" evidence="3">
    <location>
        <begin position="1"/>
        <end position="23"/>
    </location>
</feature>
<feature type="compositionally biased region" description="Basic and acidic residues" evidence="3">
    <location>
        <begin position="1"/>
        <end position="20"/>
    </location>
</feature>
<feature type="active site" evidence="1">
    <location>
        <position position="215"/>
    </location>
</feature>
<feature type="active site" evidence="2">
    <location>
        <position position="249"/>
    </location>
</feature>
<protein>
    <recommendedName>
        <fullName evidence="7">4,4'-diapolycopene-4,4'-dial dehydrogenase</fullName>
        <ecNumber evidence="5">1.2.99.10</ecNumber>
    </recommendedName>
    <alternativeName>
        <fullName evidence="6">4,4'-diapolycopene aldehyde oxidase</fullName>
    </alternativeName>
    <alternativeName>
        <fullName evidence="7">4,4'-diapolycopene-4,4'-dial oxidase</fullName>
    </alternativeName>
    <alternativeName>
        <fullName evidence="7">4,4'-diapolycopene-4,4'-dioate synthase</fullName>
    </alternativeName>
</protein>
<dbReference type="EC" id="1.2.99.10" evidence="5"/>
<dbReference type="SMR" id="P0DPF0"/>
<dbReference type="BRENDA" id="1.2.99.10">
    <property type="organism ID" value="653"/>
</dbReference>
<dbReference type="GO" id="GO:0005737">
    <property type="term" value="C:cytoplasm"/>
    <property type="evidence" value="ECO:0007669"/>
    <property type="project" value="TreeGrafter"/>
</dbReference>
<dbReference type="GO" id="GO:0004029">
    <property type="term" value="F:aldehyde dehydrogenase (NAD+) activity"/>
    <property type="evidence" value="ECO:0007669"/>
    <property type="project" value="TreeGrafter"/>
</dbReference>
<dbReference type="GO" id="GO:0006081">
    <property type="term" value="P:aldehyde metabolic process"/>
    <property type="evidence" value="ECO:0007669"/>
    <property type="project" value="InterPro"/>
</dbReference>
<dbReference type="GO" id="GO:0016117">
    <property type="term" value="P:carotenoid biosynthetic process"/>
    <property type="evidence" value="ECO:0007669"/>
    <property type="project" value="UniProtKB-KW"/>
</dbReference>
<dbReference type="CDD" id="cd07087">
    <property type="entry name" value="ALDH_F3-13-14_CALDH-like"/>
    <property type="match status" value="1"/>
</dbReference>
<dbReference type="FunFam" id="3.40.605.10:FF:000004">
    <property type="entry name" value="Aldehyde dehydrogenase"/>
    <property type="match status" value="1"/>
</dbReference>
<dbReference type="Gene3D" id="3.40.605.10">
    <property type="entry name" value="Aldehyde Dehydrogenase, Chain A, domain 1"/>
    <property type="match status" value="1"/>
</dbReference>
<dbReference type="Gene3D" id="3.40.309.10">
    <property type="entry name" value="Aldehyde Dehydrogenase, Chain A, domain 2"/>
    <property type="match status" value="1"/>
</dbReference>
<dbReference type="InterPro" id="IPR016161">
    <property type="entry name" value="Ald_DH/histidinol_DH"/>
</dbReference>
<dbReference type="InterPro" id="IPR016163">
    <property type="entry name" value="Ald_DH_C"/>
</dbReference>
<dbReference type="InterPro" id="IPR016160">
    <property type="entry name" value="Ald_DH_CS_CYS"/>
</dbReference>
<dbReference type="InterPro" id="IPR029510">
    <property type="entry name" value="Ald_DH_CS_GLU"/>
</dbReference>
<dbReference type="InterPro" id="IPR016162">
    <property type="entry name" value="Ald_DH_N"/>
</dbReference>
<dbReference type="InterPro" id="IPR015590">
    <property type="entry name" value="Aldehyde_DH_dom"/>
</dbReference>
<dbReference type="InterPro" id="IPR012394">
    <property type="entry name" value="Aldehyde_DH_NAD(P)"/>
</dbReference>
<dbReference type="PANTHER" id="PTHR43570">
    <property type="entry name" value="ALDEHYDE DEHYDROGENASE"/>
    <property type="match status" value="1"/>
</dbReference>
<dbReference type="PANTHER" id="PTHR43570:SF16">
    <property type="entry name" value="ALDEHYDE DEHYDROGENASE TYPE III, ISOFORM Q"/>
    <property type="match status" value="1"/>
</dbReference>
<dbReference type="Pfam" id="PF00171">
    <property type="entry name" value="Aldedh"/>
    <property type="match status" value="1"/>
</dbReference>
<dbReference type="PIRSF" id="PIRSF036492">
    <property type="entry name" value="ALDH"/>
    <property type="match status" value="1"/>
</dbReference>
<dbReference type="SUPFAM" id="SSF53720">
    <property type="entry name" value="ALDH-like"/>
    <property type="match status" value="1"/>
</dbReference>
<dbReference type="PROSITE" id="PS00070">
    <property type="entry name" value="ALDEHYDE_DEHYDR_CYS"/>
    <property type="match status" value="1"/>
</dbReference>
<dbReference type="PROSITE" id="PS00687">
    <property type="entry name" value="ALDEHYDE_DEHYDR_GLU"/>
    <property type="match status" value="1"/>
</dbReference>
<evidence type="ECO:0000255" key="1">
    <source>
        <dbReference type="PROSITE-ProRule" id="PRU10007"/>
    </source>
</evidence>
<evidence type="ECO:0000255" key="2">
    <source>
        <dbReference type="PROSITE-ProRule" id="PRU10008"/>
    </source>
</evidence>
<evidence type="ECO:0000256" key="3">
    <source>
        <dbReference type="SAM" id="MobiDB-lite"/>
    </source>
</evidence>
<evidence type="ECO:0000269" key="4">
    <source>
    </source>
</evidence>
<evidence type="ECO:0000269" key="5">
    <source>
    </source>
</evidence>
<evidence type="ECO:0000303" key="6">
    <source>
    </source>
</evidence>
<evidence type="ECO:0000305" key="7"/>
<evidence type="ECO:0000305" key="8">
    <source>
    </source>
</evidence>
<accession>P0DPF0</accession>
<proteinExistence type="evidence at protein level"/>
<reference key="1">
    <citation type="journal article" date="2015" name="Microbiology">
        <title>Annotation and functional assignment of the genes for the C30 carotenoid pathways from the genomes of two bacteria: Bacillus indicus and Bacillus firmus.</title>
        <authorList>
            <person name="Steiger S."/>
            <person name="Perez-Fons L."/>
            <person name="Cutting S.M."/>
            <person name="Fraser P.D."/>
            <person name="Sandmann G."/>
        </authorList>
    </citation>
    <scope>NUCLEOTIDE SEQUENCE [GENOMIC DNA]</scope>
    <scope>FUNCTION</scope>
    <scope>CATALYTIC ACTIVITY</scope>
    <source>
        <strain>GB1</strain>
    </source>
</reference>
<reference key="2">
    <citation type="journal article" date="2012" name="J. Appl. Microbiol.">
        <title>Biosynthesis of a novel C30 carotenoid in Bacillus firmus isolates.</title>
        <authorList>
            <person name="Steiger S."/>
            <person name="Perez-Fons L."/>
            <person name="Fraser P.D."/>
            <person name="Sandmann G."/>
        </authorList>
    </citation>
    <scope>FUNCTION</scope>
    <scope>PATHWAY</scope>
    <source>
        <strain>GB1</strain>
    </source>
</reference>
<comment type="function">
    <text evidence="4 5">Involved in the biosynthesis of the major C30 carotenoid 4,4'-diapolycopene-4,4'-dioic acid, which protects B.firmus from peroxidative reactions (PubMed:22738026). Catalyzes the oxidation of 4,4'-diapolycopene-4,4'-dial to yield 4,4'-diapolycopene-4,4'-dioic aci (PubMed:25326460).</text>
</comment>
<comment type="catalytic activity">
    <reaction evidence="5">
        <text>all-trans-4,4'-diapolycopene-4,4'-dial + 2 A + 2 H2O = all-trans-4,4'-diapolycopene-4,4'-dioate + 2 AH2 + 2 H(+)</text>
        <dbReference type="Rhea" id="RHEA:42380"/>
        <dbReference type="ChEBI" id="CHEBI:13193"/>
        <dbReference type="ChEBI" id="CHEBI:15377"/>
        <dbReference type="ChEBI" id="CHEBI:15378"/>
        <dbReference type="ChEBI" id="CHEBI:17499"/>
        <dbReference type="ChEBI" id="CHEBI:62450"/>
        <dbReference type="ChEBI" id="CHEBI:79063"/>
        <dbReference type="EC" id="1.2.99.10"/>
    </reaction>
</comment>
<comment type="pathway">
    <text evidence="8">Carotenoid biosynthesis.</text>
</comment>
<comment type="similarity">
    <text evidence="7">Belongs to the aldehyde dehydrogenase family.</text>
</comment>